<comment type="function">
    <text evidence="1">Catalyzes the covalent attachment of ubiquitin to other proteins. Acts as an essential factor of the anaphase promoting complex/cyclosome (APC/C), a cell cycle-regulated ubiquitin ligase that controls progression through mitosis. Acts by specifically elongating 'Lys-11'-linked polyubiquitin chains initiated by the E2 enzyme ube2c/ubch10 on APC/C substrates, enhancing the degradation of APC/C substrates by the proteasome and promoting mitotic exit.</text>
</comment>
<comment type="catalytic activity">
    <reaction evidence="1 2">
        <text>S-ubiquitinyl-[E1 ubiquitin-activating enzyme]-L-cysteine + [E2 ubiquitin-conjugating enzyme]-L-cysteine = [E1 ubiquitin-activating enzyme]-L-cysteine + S-ubiquitinyl-[E2 ubiquitin-conjugating enzyme]-L-cysteine.</text>
        <dbReference type="EC" id="2.3.2.23"/>
    </reaction>
</comment>
<comment type="pathway">
    <text evidence="1">Protein modification; protein ubiquitination.</text>
</comment>
<comment type="similarity">
    <text evidence="1">Belongs to the ubiquitin-conjugating enzyme family.</text>
</comment>
<protein>
    <recommendedName>
        <fullName>Ubiquitin-conjugating enzyme E2 S</fullName>
        <ecNumber>2.3.2.23</ecNumber>
    </recommendedName>
    <alternativeName>
        <fullName>E2 ubiquitin-conjugating enzyme S</fullName>
    </alternativeName>
    <alternativeName>
        <fullName>Ubiquitin carrier protein S</fullName>
    </alternativeName>
    <alternativeName>
        <fullName>Ubiquitin-protein ligase S</fullName>
    </alternativeName>
</protein>
<feature type="chain" id="PRO_0000390430" description="Ubiquitin-conjugating enzyme E2 S">
    <location>
        <begin position="1"/>
        <end position="211"/>
    </location>
</feature>
<feature type="domain" description="UBC core" evidence="1">
    <location>
        <begin position="11"/>
        <end position="157"/>
    </location>
</feature>
<feature type="region of interest" description="Disordered" evidence="3">
    <location>
        <begin position="157"/>
        <end position="211"/>
    </location>
</feature>
<feature type="compositionally biased region" description="Basic and acidic residues" evidence="3">
    <location>
        <begin position="157"/>
        <end position="167"/>
    </location>
</feature>
<feature type="compositionally biased region" description="Basic residues" evidence="3">
    <location>
        <begin position="197"/>
        <end position="211"/>
    </location>
</feature>
<feature type="active site" description="Glycyl thioester intermediate" evidence="1 2">
    <location>
        <position position="95"/>
    </location>
</feature>
<proteinExistence type="evidence at transcript level"/>
<gene>
    <name type="primary">ube2s</name>
</gene>
<name>UBE2S_AQUCT</name>
<organism>
    <name type="scientific">Aquarana catesbeiana</name>
    <name type="common">American bullfrog</name>
    <name type="synonym">Rana catesbeiana</name>
    <dbReference type="NCBI Taxonomy" id="8400"/>
    <lineage>
        <taxon>Eukaryota</taxon>
        <taxon>Metazoa</taxon>
        <taxon>Chordata</taxon>
        <taxon>Craniata</taxon>
        <taxon>Vertebrata</taxon>
        <taxon>Euteleostomi</taxon>
        <taxon>Amphibia</taxon>
        <taxon>Batrachia</taxon>
        <taxon>Anura</taxon>
        <taxon>Neobatrachia</taxon>
        <taxon>Ranoidea</taxon>
        <taxon>Ranidae</taxon>
        <taxon>Aquarana</taxon>
    </lineage>
</organism>
<dbReference type="EC" id="2.3.2.23"/>
<dbReference type="EMBL" id="BT081495">
    <property type="protein sequence ID" value="ACO51626.1"/>
    <property type="molecule type" value="mRNA"/>
</dbReference>
<dbReference type="SMR" id="C1C3R6"/>
<dbReference type="UniPathway" id="UPA00143"/>
<dbReference type="GO" id="GO:0005680">
    <property type="term" value="C:anaphase-promoting complex"/>
    <property type="evidence" value="ECO:0000250"/>
    <property type="project" value="UniProtKB"/>
</dbReference>
<dbReference type="GO" id="GO:0005524">
    <property type="term" value="F:ATP binding"/>
    <property type="evidence" value="ECO:0007669"/>
    <property type="project" value="UniProtKB-KW"/>
</dbReference>
<dbReference type="GO" id="GO:0061631">
    <property type="term" value="F:ubiquitin conjugating enzyme activity"/>
    <property type="evidence" value="ECO:0007669"/>
    <property type="project" value="UniProtKB-EC"/>
</dbReference>
<dbReference type="GO" id="GO:0031145">
    <property type="term" value="P:anaphase-promoting complex-dependent catabolic process"/>
    <property type="evidence" value="ECO:0000250"/>
    <property type="project" value="UniProtKB"/>
</dbReference>
<dbReference type="GO" id="GO:0051301">
    <property type="term" value="P:cell division"/>
    <property type="evidence" value="ECO:0007669"/>
    <property type="project" value="UniProtKB-KW"/>
</dbReference>
<dbReference type="GO" id="GO:0010458">
    <property type="term" value="P:exit from mitosis"/>
    <property type="evidence" value="ECO:0000250"/>
    <property type="project" value="UniProtKB"/>
</dbReference>
<dbReference type="GO" id="GO:0010994">
    <property type="term" value="P:free ubiquitin chain polymerization"/>
    <property type="evidence" value="ECO:0000250"/>
    <property type="project" value="UniProtKB"/>
</dbReference>
<dbReference type="GO" id="GO:1904668">
    <property type="term" value="P:positive regulation of ubiquitin protein ligase activity"/>
    <property type="evidence" value="ECO:0000250"/>
    <property type="project" value="UniProtKB"/>
</dbReference>
<dbReference type="GO" id="GO:0070979">
    <property type="term" value="P:protein K11-linked ubiquitination"/>
    <property type="evidence" value="ECO:0000250"/>
    <property type="project" value="UniProtKB"/>
</dbReference>
<dbReference type="CDD" id="cd23804">
    <property type="entry name" value="UBCc_UBE2S"/>
    <property type="match status" value="1"/>
</dbReference>
<dbReference type="FunFam" id="3.10.110.10:FF:000034">
    <property type="entry name" value="Ubiquitin-conjugating enzyme E2 S"/>
    <property type="match status" value="1"/>
</dbReference>
<dbReference type="Gene3D" id="3.10.110.10">
    <property type="entry name" value="Ubiquitin Conjugating Enzyme"/>
    <property type="match status" value="1"/>
</dbReference>
<dbReference type="InterPro" id="IPR050113">
    <property type="entry name" value="Ub_conjugating_enzyme"/>
</dbReference>
<dbReference type="InterPro" id="IPR000608">
    <property type="entry name" value="UBQ-conjugat_E2_core"/>
</dbReference>
<dbReference type="InterPro" id="IPR023313">
    <property type="entry name" value="UBQ-conjugating_AS"/>
</dbReference>
<dbReference type="InterPro" id="IPR016135">
    <property type="entry name" value="UBQ-conjugating_enzyme/RWD"/>
</dbReference>
<dbReference type="PANTHER" id="PTHR24067">
    <property type="entry name" value="UBIQUITIN-CONJUGATING ENZYME E2"/>
    <property type="match status" value="1"/>
</dbReference>
<dbReference type="Pfam" id="PF00179">
    <property type="entry name" value="UQ_con"/>
    <property type="match status" value="1"/>
</dbReference>
<dbReference type="SMART" id="SM00212">
    <property type="entry name" value="UBCc"/>
    <property type="match status" value="1"/>
</dbReference>
<dbReference type="SUPFAM" id="SSF54495">
    <property type="entry name" value="UBC-like"/>
    <property type="match status" value="1"/>
</dbReference>
<dbReference type="PROSITE" id="PS00183">
    <property type="entry name" value="UBC_1"/>
    <property type="match status" value="1"/>
</dbReference>
<dbReference type="PROSITE" id="PS50127">
    <property type="entry name" value="UBC_2"/>
    <property type="match status" value="1"/>
</dbReference>
<sequence>MNSNVENLPPHVIRQVYKEVSTLTPDPPEGIKIIPNEEDITDVQVSIEGPEGTPYAGGIFRMKLILGKDFPAAPPKGYFLTKIFHPNVSSNGEICVNVLKKDWKAELGIRHVLLTIKCLLIHPNPESALNEEAGRLLLENYEEYASRARLMTEIHAHSSSLRGKDPTDPCSSASVTGALGDGPMAKKHAGDRDKKLAAKKKTDKKRALRRL</sequence>
<evidence type="ECO:0000255" key="1">
    <source>
        <dbReference type="PROSITE-ProRule" id="PRU00388"/>
    </source>
</evidence>
<evidence type="ECO:0000255" key="2">
    <source>
        <dbReference type="PROSITE-ProRule" id="PRU10133"/>
    </source>
</evidence>
<evidence type="ECO:0000256" key="3">
    <source>
        <dbReference type="SAM" id="MobiDB-lite"/>
    </source>
</evidence>
<reference key="1">
    <citation type="submission" date="2009-04" db="EMBL/GenBank/DDBJ databases">
        <title>Rana catesbeiana ESTs and full-length cDNAs.</title>
        <authorList>
            <person name="Helbing C.C."/>
            <person name="Veldhoen N."/>
            <person name="Leong J."/>
            <person name="Koop B.F."/>
        </authorList>
    </citation>
    <scope>NUCLEOTIDE SEQUENCE [LARGE SCALE MRNA]</scope>
</reference>
<keyword id="KW-0067">ATP-binding</keyword>
<keyword id="KW-0131">Cell cycle</keyword>
<keyword id="KW-0132">Cell division</keyword>
<keyword id="KW-0547">Nucleotide-binding</keyword>
<keyword id="KW-0808">Transferase</keyword>
<keyword id="KW-0833">Ubl conjugation pathway</keyword>
<accession>C1C3R6</accession>